<comment type="function">
    <text evidence="3">Reductase involved in lignan biosynthesis. Catalyzes the enantioselective sequential conversion of (-)-pinoresinol into (-)-lariciresinol and of (-)-lariciresinol into (+)-secoisolariciresinol. Can also convert with a lower efficiency (+)-pinoresinol into (+)-lariciresinol, but not (+)-lariciresinol into (-)-secoisolariciresinol. Abstracts the 4R-hydride from the NADPH cofactor during catalysis.</text>
</comment>
<comment type="catalytic activity">
    <reaction evidence="3">
        <text>(+)-lariciresinol + NADP(+) = (+)-pinoresinol + NADPH + H(+)</text>
        <dbReference type="Rhea" id="RHEA:34419"/>
        <dbReference type="ChEBI" id="CHEBI:40"/>
        <dbReference type="ChEBI" id="CHEBI:15378"/>
        <dbReference type="ChEBI" id="CHEBI:57783"/>
        <dbReference type="ChEBI" id="CHEBI:58349"/>
        <dbReference type="ChEBI" id="CHEBI:67246"/>
        <dbReference type="EC" id="1.23.1.1"/>
    </reaction>
</comment>
<comment type="catalytic activity">
    <reaction evidence="3">
        <text>(-)-lariciresinol + NADP(+) = (-)-pinoresinol + NADPH + H(+)</text>
        <dbReference type="Rhea" id="RHEA:34427"/>
        <dbReference type="ChEBI" id="CHEBI:15378"/>
        <dbReference type="ChEBI" id="CHEBI:57783"/>
        <dbReference type="ChEBI" id="CHEBI:58349"/>
        <dbReference type="ChEBI" id="CHEBI:67244"/>
        <dbReference type="ChEBI" id="CHEBI:67245"/>
        <dbReference type="EC" id="1.23.1.3"/>
    </reaction>
</comment>
<comment type="catalytic activity">
    <reaction evidence="3">
        <text>(+)-secoisolariciresinol + NADP(+) = (-)-lariciresinol + NADPH + H(+)</text>
        <dbReference type="Rhea" id="RHEA:34431"/>
        <dbReference type="ChEBI" id="CHEBI:15378"/>
        <dbReference type="ChEBI" id="CHEBI:57783"/>
        <dbReference type="ChEBI" id="CHEBI:58349"/>
        <dbReference type="ChEBI" id="CHEBI:67244"/>
        <dbReference type="ChEBI" id="CHEBI:67247"/>
        <dbReference type="EC" id="1.23.1.4"/>
    </reaction>
</comment>
<comment type="subunit">
    <text evidence="2">Dimer.</text>
</comment>
<comment type="miscellaneous">
    <text evidence="5">Phe-164, Val-268 and Leu-272 are involved in enantiospecific binding of (-)-pinoresinol while in PLR_Tp2, a 'Gly-268' and a symmetric substitution between Phe and Leu favor binding of the (+)-antipode of pinoresinol.</text>
</comment>
<comment type="similarity">
    <text evidence="4">Belongs to the NmrA-type oxidoreductase family. Isoflavone reductase subfamily.</text>
</comment>
<accession>Q9LD14</accession>
<organism>
    <name type="scientific">Thuja plicata</name>
    <name type="common">Western red-cedar</name>
    <name type="synonym">Giant arborvitae</name>
    <dbReference type="NCBI Taxonomy" id="3316"/>
    <lineage>
        <taxon>Eukaryota</taxon>
        <taxon>Viridiplantae</taxon>
        <taxon>Streptophyta</taxon>
        <taxon>Embryophyta</taxon>
        <taxon>Tracheophyta</taxon>
        <taxon>Spermatophyta</taxon>
        <taxon>Pinopsida</taxon>
        <taxon>Pinidae</taxon>
        <taxon>Conifers II</taxon>
        <taxon>Cupressales</taxon>
        <taxon>Cupressaceae</taxon>
        <taxon>Thuja</taxon>
    </lineage>
</organism>
<proteinExistence type="evidence at protein level"/>
<feature type="initiator methionine" description="Removed" evidence="1">
    <location>
        <position position="1"/>
    </location>
</feature>
<feature type="chain" id="PRO_0000422932" description="Bifunctional pinoresinol-lariciresinol reductase 1">
    <location>
        <begin position="2"/>
        <end position="313"/>
    </location>
</feature>
<feature type="active site" description="Proton acceptor" evidence="5">
    <location>
        <position position="138"/>
    </location>
</feature>
<feature type="binding site" evidence="5">
    <location>
        <begin position="11"/>
        <end position="17"/>
    </location>
    <ligand>
        <name>NADP(+)</name>
        <dbReference type="ChEBI" id="CHEBI:58349"/>
    </ligand>
</feature>
<feature type="binding site" evidence="5">
    <location>
        <position position="36"/>
    </location>
    <ligand>
        <name>NADP(+)</name>
        <dbReference type="ChEBI" id="CHEBI:58349"/>
    </ligand>
</feature>
<feature type="binding site" evidence="5">
    <location>
        <position position="45"/>
    </location>
    <ligand>
        <name>NADP(+)</name>
        <dbReference type="ChEBI" id="CHEBI:58349"/>
    </ligand>
</feature>
<feature type="binding site" evidence="5">
    <location>
        <position position="142"/>
    </location>
    <ligand>
        <name>NADP(+)</name>
        <dbReference type="ChEBI" id="CHEBI:58349"/>
    </ligand>
</feature>
<feature type="binding site" evidence="5">
    <location>
        <position position="271"/>
    </location>
    <ligand>
        <name>substrate</name>
    </ligand>
</feature>
<feature type="mutagenesis site" description="Loss of activity." evidence="2">
    <original>K</original>
    <variation>A</variation>
    <location>
        <position position="138"/>
    </location>
</feature>
<feature type="strand" evidence="6">
    <location>
        <begin position="7"/>
        <end position="11"/>
    </location>
</feature>
<feature type="helix" evidence="6">
    <location>
        <begin position="17"/>
        <end position="26"/>
    </location>
</feature>
<feature type="strand" evidence="6">
    <location>
        <begin position="31"/>
        <end position="34"/>
    </location>
</feature>
<feature type="helix" evidence="6">
    <location>
        <begin position="43"/>
        <end position="53"/>
    </location>
</feature>
<feature type="turn" evidence="6">
    <location>
        <begin position="54"/>
        <end position="56"/>
    </location>
</feature>
<feature type="strand" evidence="6">
    <location>
        <begin position="58"/>
        <end position="60"/>
    </location>
</feature>
<feature type="helix" evidence="6">
    <location>
        <begin position="67"/>
        <end position="74"/>
    </location>
</feature>
<feature type="strand" evidence="6">
    <location>
        <begin position="78"/>
        <end position="82"/>
    </location>
</feature>
<feature type="strand" evidence="6">
    <location>
        <begin position="87"/>
        <end position="90"/>
    </location>
</feature>
<feature type="turn" evidence="6">
    <location>
        <begin position="91"/>
        <end position="95"/>
    </location>
</feature>
<feature type="helix" evidence="6">
    <location>
        <begin position="96"/>
        <end position="105"/>
    </location>
</feature>
<feature type="strand" evidence="6">
    <location>
        <begin position="110"/>
        <end position="113"/>
    </location>
</feature>
<feature type="helix" evidence="6">
    <location>
        <begin position="133"/>
        <end position="147"/>
    </location>
</feature>
<feature type="strand" evidence="6">
    <location>
        <begin position="154"/>
        <end position="156"/>
    </location>
</feature>
<feature type="helix" evidence="6">
    <location>
        <begin position="161"/>
        <end position="164"/>
    </location>
</feature>
<feature type="turn" evidence="6">
    <location>
        <begin position="165"/>
        <end position="167"/>
    </location>
</feature>
<feature type="strand" evidence="6">
    <location>
        <begin position="179"/>
        <end position="182"/>
    </location>
</feature>
<feature type="strand" evidence="6">
    <location>
        <begin position="190"/>
        <end position="195"/>
    </location>
</feature>
<feature type="helix" evidence="6">
    <location>
        <begin position="197"/>
        <end position="207"/>
    </location>
</feature>
<feature type="helix" evidence="6">
    <location>
        <begin position="211"/>
        <end position="213"/>
    </location>
</feature>
<feature type="strand" evidence="6">
    <location>
        <begin position="214"/>
        <end position="219"/>
    </location>
</feature>
<feature type="helix" evidence="6">
    <location>
        <begin position="223"/>
        <end position="225"/>
    </location>
</feature>
<feature type="strand" evidence="6">
    <location>
        <begin position="226"/>
        <end position="228"/>
    </location>
</feature>
<feature type="helix" evidence="6">
    <location>
        <begin position="229"/>
        <end position="240"/>
    </location>
</feature>
<feature type="helix" evidence="6">
    <location>
        <begin position="252"/>
        <end position="258"/>
    </location>
</feature>
<feature type="helix" evidence="6">
    <location>
        <begin position="265"/>
        <end position="268"/>
    </location>
</feature>
<feature type="turn" evidence="6">
    <location>
        <begin position="269"/>
        <end position="271"/>
    </location>
</feature>
<feature type="helix" evidence="6">
    <location>
        <begin position="272"/>
        <end position="275"/>
    </location>
</feature>
<feature type="turn" evidence="6">
    <location>
        <begin position="280"/>
        <end position="282"/>
    </location>
</feature>
<feature type="strand" evidence="6">
    <location>
        <begin position="288"/>
        <end position="292"/>
    </location>
</feature>
<feature type="helix" evidence="6">
    <location>
        <begin position="293"/>
        <end position="296"/>
    </location>
</feature>
<feature type="helix" evidence="6">
    <location>
        <begin position="305"/>
        <end position="309"/>
    </location>
</feature>
<name>PILR1_THUPL</name>
<sequence>MDKKSRVLIVGGTGYIGKRIVNASISLGHPTYVLFRPEVVSNIDKVQMLLYFKQLGAKLIEASLDDHQRLVDALKQVDVVISALAGGVLSHHILEQLKLVEAIKEAGNIKRFLPSEFGMDPDIMEHALQPGSITFIDKRKVRRAIEAASIPYTYVSSNMFAGYFAGSLAQLDGHMMPPRDKVLIYGDGNVKGIWVDEDDVGTYTIKSIDDPQTLNKTMYIRPPMNILSQKEVIQIWERLSEQNLDKIYISSQDFLADMKDKSYEEKIVRCHLYQIFFRGDLYNFEIGPNAIEATKLYPEVKYVTMDSYLERYV</sequence>
<reference key="1">
    <citation type="journal article" date="1999" name="J. Biol. Chem.">
        <title>Recombinant pinoresinol-lariciresinol reductases from western red cedar (Thuja plicata) catalyze opposite enantiospecific conversions.</title>
        <authorList>
            <person name="Fujita M."/>
            <person name="Gang D.R."/>
            <person name="Davin L.B."/>
            <person name="Lewis N.G."/>
        </authorList>
    </citation>
    <scope>NUCLEOTIDE SEQUENCE [MRNA]</scope>
    <scope>FUNCTION</scope>
    <scope>CATALYTIC ACTIVITY</scope>
    <source>
        <tissue>Stem</tissue>
    </source>
</reference>
<reference key="2">
    <citation type="journal article" date="2003" name="J. Biol. Chem.">
        <title>Crystal structures of pinoresinol-lariciresinol and phenylcoumaran benzylic ether reductases and their relationship to isoflavone reductases.</title>
        <authorList>
            <person name="Min T."/>
            <person name="Kasahara H."/>
            <person name="Bedgar D.L."/>
            <person name="Youn B."/>
            <person name="Lawrence P.K."/>
            <person name="Gang D.R."/>
            <person name="Halls S.C."/>
            <person name="Park H."/>
            <person name="Hilsenbeck J.L."/>
            <person name="Davin L.B."/>
            <person name="Lewis N.G."/>
            <person name="Kang C."/>
            <person name="Lewis N.G."/>
        </authorList>
    </citation>
    <scope>X-RAY CRYSTALLOGRAPHY (2.50 ANGSTROMS)</scope>
    <scope>SUBUNIT</scope>
    <scope>ACTIVE SITE</scope>
    <scope>BINDING SITES</scope>
    <scope>MUTAGENESIS OF LYS-138</scope>
</reference>
<keyword id="KW-0002">3D-structure</keyword>
<keyword id="KW-0521">NADP</keyword>
<keyword id="KW-0560">Oxidoreductase</keyword>
<evidence type="ECO:0000250" key="1"/>
<evidence type="ECO:0000269" key="2">
    <source>
    </source>
</evidence>
<evidence type="ECO:0000269" key="3">
    <source>
    </source>
</evidence>
<evidence type="ECO:0000305" key="4"/>
<evidence type="ECO:0000305" key="5">
    <source>
    </source>
</evidence>
<evidence type="ECO:0007829" key="6">
    <source>
        <dbReference type="PDB" id="1QYD"/>
    </source>
</evidence>
<dbReference type="EC" id="1.23.1.1"/>
<dbReference type="EC" id="1.23.1.4"/>
<dbReference type="EC" id="1.23.1.3"/>
<dbReference type="EMBL" id="AF242503">
    <property type="protein sequence ID" value="AAF63507.1"/>
    <property type="molecule type" value="mRNA"/>
</dbReference>
<dbReference type="PDB" id="1QYD">
    <property type="method" value="X-ray"/>
    <property type="resolution" value="2.50 A"/>
    <property type="chains" value="A/B/C/D=1-313"/>
</dbReference>
<dbReference type="PDBsum" id="1QYD"/>
<dbReference type="SMR" id="Q9LD14"/>
<dbReference type="KEGG" id="ag:AAF63507"/>
<dbReference type="BRENDA" id="1.23.1.3">
    <property type="organism ID" value="6364"/>
</dbReference>
<dbReference type="BRENDA" id="1.23.1.4">
    <property type="organism ID" value="6364"/>
</dbReference>
<dbReference type="EvolutionaryTrace" id="Q9LD14"/>
<dbReference type="GO" id="GO:0010284">
    <property type="term" value="F:lariciresinol reductase activity"/>
    <property type="evidence" value="ECO:0000314"/>
    <property type="project" value="UniProtKB"/>
</dbReference>
<dbReference type="GO" id="GO:0010283">
    <property type="term" value="F:pinoresinol reductase activity"/>
    <property type="evidence" value="ECO:0000314"/>
    <property type="project" value="UniProtKB"/>
</dbReference>
<dbReference type="GO" id="GO:1902132">
    <property type="term" value="P:(+)-lariciresinol biosynthetic process"/>
    <property type="evidence" value="ECO:0000314"/>
    <property type="project" value="UniProtKB"/>
</dbReference>
<dbReference type="GO" id="GO:1902125">
    <property type="term" value="P:(+)-pinoresinol catabolic process"/>
    <property type="evidence" value="ECO:0000314"/>
    <property type="project" value="UniProtKB"/>
</dbReference>
<dbReference type="GO" id="GO:1902135">
    <property type="term" value="P:(+)-secoisolariciresinol biosynthetic process"/>
    <property type="evidence" value="ECO:0000314"/>
    <property type="project" value="UniProtKB"/>
</dbReference>
<dbReference type="GO" id="GO:1902129">
    <property type="term" value="P:(-)-lariciresinol biosynthetic process"/>
    <property type="evidence" value="ECO:0000314"/>
    <property type="project" value="UniProtKB"/>
</dbReference>
<dbReference type="GO" id="GO:1902128">
    <property type="term" value="P:(-)-lariciresinol catabolic process"/>
    <property type="evidence" value="ECO:0000314"/>
    <property type="project" value="UniProtKB"/>
</dbReference>
<dbReference type="GO" id="GO:1902123">
    <property type="term" value="P:(-)-pinoresinol catabolic process"/>
    <property type="evidence" value="ECO:0000314"/>
    <property type="project" value="UniProtKB"/>
</dbReference>
<dbReference type="GO" id="GO:0009807">
    <property type="term" value="P:lignan biosynthetic process"/>
    <property type="evidence" value="ECO:0000314"/>
    <property type="project" value="UniProtKB"/>
</dbReference>
<dbReference type="CDD" id="cd05259">
    <property type="entry name" value="PCBER_SDR_a"/>
    <property type="match status" value="1"/>
</dbReference>
<dbReference type="Gene3D" id="3.40.50.720">
    <property type="entry name" value="NAD(P)-binding Rossmann-like Domain"/>
    <property type="match status" value="1"/>
</dbReference>
<dbReference type="Gene3D" id="3.90.25.10">
    <property type="entry name" value="UDP-galactose 4-epimerase, domain 1"/>
    <property type="match status" value="1"/>
</dbReference>
<dbReference type="InterPro" id="IPR036291">
    <property type="entry name" value="NAD(P)-bd_dom_sf"/>
</dbReference>
<dbReference type="InterPro" id="IPR008030">
    <property type="entry name" value="NmrA-like"/>
</dbReference>
<dbReference type="InterPro" id="IPR050608">
    <property type="entry name" value="NmrA-type/Isoflavone_red_sf"/>
</dbReference>
<dbReference type="InterPro" id="IPR045312">
    <property type="entry name" value="PCBER-like"/>
</dbReference>
<dbReference type="PANTHER" id="PTHR43349:SF4">
    <property type="entry name" value="PINORESINOL REDUCTASE 1-RELATED"/>
    <property type="match status" value="1"/>
</dbReference>
<dbReference type="PANTHER" id="PTHR43349">
    <property type="entry name" value="PINORESINOL REDUCTASE-RELATED"/>
    <property type="match status" value="1"/>
</dbReference>
<dbReference type="Pfam" id="PF05368">
    <property type="entry name" value="NmrA"/>
    <property type="match status" value="1"/>
</dbReference>
<dbReference type="SUPFAM" id="SSF51735">
    <property type="entry name" value="NAD(P)-binding Rossmann-fold domains"/>
    <property type="match status" value="1"/>
</dbReference>
<protein>
    <recommendedName>
        <fullName>Bifunctional pinoresinol-lariciresinol reductase 1</fullName>
        <shortName>PLR-Tp1</shortName>
    </recommendedName>
    <alternativeName>
        <fullName>(+)-pinoresinol reductase</fullName>
        <ecNumber>1.23.1.1</ecNumber>
    </alternativeName>
    <alternativeName>
        <fullName>(-)-lariciresinol reductase</fullName>
        <ecNumber>1.23.1.4</ecNumber>
    </alternativeName>
    <alternativeName>
        <fullName>(-)-pinoresinol reductase</fullName>
        <ecNumber>1.23.1.3</ecNumber>
    </alternativeName>
</protein>
<gene>
    <name type="primary">PLR_Tp1</name>
</gene>